<name>PETG_THEVB</name>
<organism>
    <name type="scientific">Thermosynechococcus vestitus (strain NIES-2133 / IAM M-273 / BP-1)</name>
    <dbReference type="NCBI Taxonomy" id="197221"/>
    <lineage>
        <taxon>Bacteria</taxon>
        <taxon>Bacillati</taxon>
        <taxon>Cyanobacteriota</taxon>
        <taxon>Cyanophyceae</taxon>
        <taxon>Acaryochloridales</taxon>
        <taxon>Thermosynechococcaceae</taxon>
        <taxon>Thermosynechococcus</taxon>
    </lineage>
</organism>
<protein>
    <recommendedName>
        <fullName evidence="1">Cytochrome b6-f complex subunit 5</fullName>
    </recommendedName>
    <alternativeName>
        <fullName evidence="1">Cytochrome b6-f complex subunit PetG</fullName>
    </alternativeName>
    <alternativeName>
        <fullName evidence="1">Cytochrome b6-f complex subunit V</fullName>
    </alternativeName>
</protein>
<evidence type="ECO:0000255" key="1">
    <source>
        <dbReference type="HAMAP-Rule" id="MF_00432"/>
    </source>
</evidence>
<dbReference type="EMBL" id="BA000039">
    <property type="protein sequence ID" value="BAC08429.1"/>
    <property type="molecule type" value="Genomic_DNA"/>
</dbReference>
<dbReference type="RefSeq" id="NP_681667.1">
    <property type="nucleotide sequence ID" value="NC_004113.1"/>
</dbReference>
<dbReference type="RefSeq" id="WP_011056721.1">
    <property type="nucleotide sequence ID" value="NC_004113.1"/>
</dbReference>
<dbReference type="SMR" id="Q8DKI2"/>
<dbReference type="STRING" id="197221.gene:10747469"/>
<dbReference type="EnsemblBacteria" id="BAC08429">
    <property type="protein sequence ID" value="BAC08429"/>
    <property type="gene ID" value="BAC08429"/>
</dbReference>
<dbReference type="KEGG" id="tel:tsr0877"/>
<dbReference type="PATRIC" id="fig|197221.4.peg.923"/>
<dbReference type="eggNOG" id="ENOG5033BE9">
    <property type="taxonomic scope" value="Bacteria"/>
</dbReference>
<dbReference type="Proteomes" id="UP000000440">
    <property type="component" value="Chromosome"/>
</dbReference>
<dbReference type="GO" id="GO:0009512">
    <property type="term" value="C:cytochrome b6f complex"/>
    <property type="evidence" value="ECO:0007669"/>
    <property type="project" value="InterPro"/>
</dbReference>
<dbReference type="GO" id="GO:0031676">
    <property type="term" value="C:plasma membrane-derived thylakoid membrane"/>
    <property type="evidence" value="ECO:0007669"/>
    <property type="project" value="UniProtKB-SubCell"/>
</dbReference>
<dbReference type="GO" id="GO:0045158">
    <property type="term" value="F:electron transporter, transferring electrons within cytochrome b6/f complex of photosystem II activity"/>
    <property type="evidence" value="ECO:0007669"/>
    <property type="project" value="UniProtKB-UniRule"/>
</dbReference>
<dbReference type="GO" id="GO:0017004">
    <property type="term" value="P:cytochrome complex assembly"/>
    <property type="evidence" value="ECO:0007669"/>
    <property type="project" value="UniProtKB-UniRule"/>
</dbReference>
<dbReference type="GO" id="GO:0015979">
    <property type="term" value="P:photosynthesis"/>
    <property type="evidence" value="ECO:0007669"/>
    <property type="project" value="UniProtKB-KW"/>
</dbReference>
<dbReference type="HAMAP" id="MF_00432">
    <property type="entry name" value="Cytb6_f_PetG"/>
    <property type="match status" value="1"/>
</dbReference>
<dbReference type="InterPro" id="IPR003683">
    <property type="entry name" value="Cyt_6/f_cplx_su5"/>
</dbReference>
<dbReference type="InterPro" id="IPR036099">
    <property type="entry name" value="Cyt_6/f_cplx_su5_sf"/>
</dbReference>
<dbReference type="NCBIfam" id="NF001907">
    <property type="entry name" value="PRK00665.1"/>
    <property type="match status" value="1"/>
</dbReference>
<dbReference type="Pfam" id="PF02529">
    <property type="entry name" value="PetG"/>
    <property type="match status" value="1"/>
</dbReference>
<dbReference type="PIRSF" id="PIRSF000034">
    <property type="entry name" value="Cyt_b6-f_V"/>
    <property type="match status" value="1"/>
</dbReference>
<dbReference type="SUPFAM" id="SSF103446">
    <property type="entry name" value="PetG subunit of the cytochrome b6f complex"/>
    <property type="match status" value="1"/>
</dbReference>
<gene>
    <name evidence="1" type="primary">petG</name>
    <name type="ordered locus">tsr0877</name>
</gene>
<comment type="function">
    <text evidence="1">Component of the cytochrome b6-f complex, which mediates electron transfer between photosystem II (PSII) and photosystem I (PSI), cyclic electron flow around PSI, and state transitions. PetG is required for either the stability or assembly of the cytochrome b6-f complex.</text>
</comment>
<comment type="subunit">
    <text evidence="1">The 4 large subunits of the cytochrome b6-f complex are cytochrome b6, subunit IV (17 kDa polypeptide, PetD), cytochrome f and the Rieske protein, while the 4 small subunits are PetG, PetL, PetM and PetN. The complex functions as a dimer.</text>
</comment>
<comment type="subcellular location">
    <subcellularLocation>
        <location evidence="1">Cellular thylakoid membrane</location>
        <topology evidence="1">Single-pass membrane protein</topology>
    </subcellularLocation>
</comment>
<comment type="similarity">
    <text evidence="1">Belongs to the PetG family.</text>
</comment>
<accession>Q8DKI2</accession>
<sequence length="37" mass="4067">MIEPLLCGIVLGLIPVTLAGLFFAAYQQYKRGSQLEL</sequence>
<proteinExistence type="inferred from homology"/>
<feature type="chain" id="PRO_0000216415" description="Cytochrome b6-f complex subunit 5">
    <location>
        <begin position="1"/>
        <end position="37"/>
    </location>
</feature>
<feature type="transmembrane region" description="Helical" evidence="1">
    <location>
        <begin position="5"/>
        <end position="25"/>
    </location>
</feature>
<reference key="1">
    <citation type="journal article" date="2002" name="DNA Res.">
        <title>Complete genome structure of the thermophilic cyanobacterium Thermosynechococcus elongatus BP-1.</title>
        <authorList>
            <person name="Nakamura Y."/>
            <person name="Kaneko T."/>
            <person name="Sato S."/>
            <person name="Ikeuchi M."/>
            <person name="Katoh H."/>
            <person name="Sasamoto S."/>
            <person name="Watanabe A."/>
            <person name="Iriguchi M."/>
            <person name="Kawashima K."/>
            <person name="Kimura T."/>
            <person name="Kishida Y."/>
            <person name="Kiyokawa C."/>
            <person name="Kohara M."/>
            <person name="Matsumoto M."/>
            <person name="Matsuno A."/>
            <person name="Nakazaki N."/>
            <person name="Shimpo S."/>
            <person name="Sugimoto M."/>
            <person name="Takeuchi C."/>
            <person name="Yamada M."/>
            <person name="Tabata S."/>
        </authorList>
    </citation>
    <scope>NUCLEOTIDE SEQUENCE [LARGE SCALE GENOMIC DNA]</scope>
    <source>
        <strain>NIES-2133 / IAM M-273 / BP-1</strain>
    </source>
</reference>
<keyword id="KW-0249">Electron transport</keyword>
<keyword id="KW-0472">Membrane</keyword>
<keyword id="KW-0602">Photosynthesis</keyword>
<keyword id="KW-1185">Reference proteome</keyword>
<keyword id="KW-0793">Thylakoid</keyword>
<keyword id="KW-0812">Transmembrane</keyword>
<keyword id="KW-1133">Transmembrane helix</keyword>
<keyword id="KW-0813">Transport</keyword>